<protein>
    <recommendedName>
        <fullName>Mitochondrial-type heat shock protein 70</fullName>
        <shortName>mit-hsp70</shortName>
    </recommendedName>
</protein>
<reference key="1">
    <citation type="journal article" date="1998" name="Mol. Biol. Evol.">
        <title>Microsporidia, amitochondrial protists, possess a 70-kDa heat shock protein gene of mitochondrial evolutionary origin.</title>
        <authorList>
            <person name="Peyretaillade E."/>
            <person name="Broussolle V."/>
            <person name="Peyret P."/>
            <person name="Metenier G."/>
            <person name="Gouy M."/>
            <person name="Vivares C.P."/>
        </authorList>
    </citation>
    <scope>NUCLEOTIDE SEQUENCE [GENOMIC DNA]</scope>
</reference>
<reference key="2">
    <citation type="journal article" date="2001" name="Nature">
        <title>Genome sequence and gene compaction of the eukaryote parasite Encephalitozoon cuniculi.</title>
        <authorList>
            <person name="Katinka M.D."/>
            <person name="Duprat S."/>
            <person name="Cornillot E."/>
            <person name="Metenier G."/>
            <person name="Thomarat F."/>
            <person name="Prensier G."/>
            <person name="Barbe V."/>
            <person name="Peyretaillade E."/>
            <person name="Brottier P."/>
            <person name="Wincker P."/>
            <person name="Delbac F."/>
            <person name="El Alaoui H."/>
            <person name="Peyret P."/>
            <person name="Saurin W."/>
            <person name="Gouy M."/>
            <person name="Weissenbach J."/>
            <person name="Vivares C.P."/>
        </authorList>
    </citation>
    <scope>NUCLEOTIDE SEQUENCE [LARGE SCALE GENOMIC DNA]</scope>
    <source>
        <strain>GB-M1</strain>
    </source>
</reference>
<proteinExistence type="inferred from homology"/>
<evidence type="ECO:0000305" key="1"/>
<sequence length="592" mass="65092">MSNADAPSRKFSSSIIGIDLGTTNSCVSVIKDGKPVIIENQEGERTTPSVVSILKDEVVVGTQARNRILMHPRNTIFASKRLIGRKFGDPEVEKYVKGLPFDTMSHCNGDVWIRVDGKKYSPAQIGAFVLSKLKSSAEAFLSHPVARSVITVPAYFNDSQRQATKDAGRIAGLDVVRVINEPTAAALAYGLDKSARGNIAVYDLGGGTFDISILEVEDGVFHVKATNGDTFLGGEDLDNEVVKFIVEDFKQKEGIDLSNDVDALGRIKEGAEKIKKELSVSCTSKMEIPYICNSQGGPKHLCREITRSEFEQIAKKIVERTIAPCKRALADAGLDSSDIKHVILVGGMTRMPYVRRVVKEIFGIEPSTDINPDEAVANGAALQGGVLMGEIDDVLLLDVAPLSLGIELLGGVFSRVIRRNTTIPFKETQVFSTSEDNQTEVDIKVYQGERSMVADNKYLGQIKLKSIPPLPRGVPRIEVTFESDANGIYRVTAQDSITKEPQSLEIIPSSGLTEAEVERMVEESERLRHLDEMKRRKAELIVSSSELLRRPPTELERIPKNYLDRLGKVVKGEDFDLKEMEEVLLSAKKSMS</sequence>
<organism>
    <name type="scientific">Encephalitozoon cuniculi (strain GB-M1)</name>
    <name type="common">Microsporidian parasite</name>
    <dbReference type="NCBI Taxonomy" id="284813"/>
    <lineage>
        <taxon>Eukaryota</taxon>
        <taxon>Fungi</taxon>
        <taxon>Fungi incertae sedis</taxon>
        <taxon>Microsporidia</taxon>
        <taxon>Unikaryonidae</taxon>
        <taxon>Encephalitozoon</taxon>
    </lineage>
</organism>
<accession>O96772</accession>
<dbReference type="EMBL" id="AJ012470">
    <property type="protein sequence ID" value="CAA10035.1"/>
    <property type="molecule type" value="Genomic_DNA"/>
</dbReference>
<dbReference type="EMBL" id="AL590450">
    <property type="protein sequence ID" value="CAD25964.1"/>
    <property type="molecule type" value="Genomic_DNA"/>
</dbReference>
<dbReference type="PIR" id="T43807">
    <property type="entry name" value="T43807"/>
</dbReference>
<dbReference type="RefSeq" id="NP_586360.1">
    <property type="nucleotide sequence ID" value="NM_001042193.1"/>
</dbReference>
<dbReference type="SMR" id="O96772"/>
<dbReference type="FunCoup" id="O96772">
    <property type="interactions" value="226"/>
</dbReference>
<dbReference type="STRING" id="284813.O96772"/>
<dbReference type="GeneID" id="860013"/>
<dbReference type="KEGG" id="ecu:ECU11_0540"/>
<dbReference type="VEuPathDB" id="MicrosporidiaDB:ECU11_0540"/>
<dbReference type="HOGENOM" id="CLU_005965_2_1_1"/>
<dbReference type="InParanoid" id="O96772"/>
<dbReference type="OMA" id="MGTDWKI"/>
<dbReference type="OrthoDB" id="2401965at2759"/>
<dbReference type="Proteomes" id="UP000000819">
    <property type="component" value="Chromosome XI"/>
</dbReference>
<dbReference type="GO" id="GO:0005634">
    <property type="term" value="C:nucleus"/>
    <property type="evidence" value="ECO:0007669"/>
    <property type="project" value="UniProtKB-SubCell"/>
</dbReference>
<dbReference type="GO" id="GO:0005524">
    <property type="term" value="F:ATP binding"/>
    <property type="evidence" value="ECO:0007669"/>
    <property type="project" value="UniProtKB-KW"/>
</dbReference>
<dbReference type="GO" id="GO:0140662">
    <property type="term" value="F:ATP-dependent protein folding chaperone"/>
    <property type="evidence" value="ECO:0007669"/>
    <property type="project" value="InterPro"/>
</dbReference>
<dbReference type="CDD" id="cd10234">
    <property type="entry name" value="ASKHA_NBD_HSP70_DnaK-like"/>
    <property type="match status" value="1"/>
</dbReference>
<dbReference type="FunFam" id="2.60.34.10:FF:000012">
    <property type="entry name" value="Heat shock 70 kDa protein"/>
    <property type="match status" value="1"/>
</dbReference>
<dbReference type="FunFam" id="3.30.30.30:FF:000003">
    <property type="entry name" value="Heat shock protein 9"/>
    <property type="match status" value="1"/>
</dbReference>
<dbReference type="FunFam" id="3.30.420.40:FF:000004">
    <property type="entry name" value="Molecular chaperone DnaK"/>
    <property type="match status" value="1"/>
</dbReference>
<dbReference type="FunFam" id="3.90.640.10:FF:000003">
    <property type="entry name" value="Molecular chaperone DnaK"/>
    <property type="match status" value="1"/>
</dbReference>
<dbReference type="Gene3D" id="3.30.420.40">
    <property type="match status" value="2"/>
</dbReference>
<dbReference type="Gene3D" id="3.90.640.10">
    <property type="entry name" value="Actin, Chain A, domain 4"/>
    <property type="match status" value="1"/>
</dbReference>
<dbReference type="Gene3D" id="2.60.34.10">
    <property type="entry name" value="Substrate Binding Domain Of DNAk, Chain A, domain 1"/>
    <property type="match status" value="1"/>
</dbReference>
<dbReference type="InterPro" id="IPR043129">
    <property type="entry name" value="ATPase_NBD"/>
</dbReference>
<dbReference type="InterPro" id="IPR018181">
    <property type="entry name" value="Heat_shock_70_CS"/>
</dbReference>
<dbReference type="InterPro" id="IPR029047">
    <property type="entry name" value="HSP70_peptide-bd_sf"/>
</dbReference>
<dbReference type="InterPro" id="IPR013126">
    <property type="entry name" value="Hsp_70_fam"/>
</dbReference>
<dbReference type="NCBIfam" id="NF001413">
    <property type="entry name" value="PRK00290.1"/>
    <property type="match status" value="1"/>
</dbReference>
<dbReference type="PANTHER" id="PTHR19375">
    <property type="entry name" value="HEAT SHOCK PROTEIN 70KDA"/>
    <property type="match status" value="1"/>
</dbReference>
<dbReference type="Pfam" id="PF00012">
    <property type="entry name" value="HSP70"/>
    <property type="match status" value="1"/>
</dbReference>
<dbReference type="PRINTS" id="PR00301">
    <property type="entry name" value="HEATSHOCK70"/>
</dbReference>
<dbReference type="SUPFAM" id="SSF53067">
    <property type="entry name" value="Actin-like ATPase domain"/>
    <property type="match status" value="2"/>
</dbReference>
<dbReference type="SUPFAM" id="SSF100920">
    <property type="entry name" value="Heat shock protein 70kD (HSP70), peptide-binding domain"/>
    <property type="match status" value="1"/>
</dbReference>
<dbReference type="PROSITE" id="PS00297">
    <property type="entry name" value="HSP70_1"/>
    <property type="match status" value="1"/>
</dbReference>
<dbReference type="PROSITE" id="PS00329">
    <property type="entry name" value="HSP70_2"/>
    <property type="match status" value="1"/>
</dbReference>
<dbReference type="PROSITE" id="PS01036">
    <property type="entry name" value="HSP70_3"/>
    <property type="match status" value="1"/>
</dbReference>
<gene>
    <name type="primary">HSP70</name>
    <name type="ordered locus">ECU11_0540</name>
</gene>
<comment type="function">
    <text>May act as a chaperone.</text>
</comment>
<comment type="subcellular location">
    <subcellularLocation>
        <location evidence="1">Nucleus</location>
    </subcellularLocation>
</comment>
<comment type="similarity">
    <text evidence="1">Belongs to the heat shock protein 70 family.</text>
</comment>
<name>HSP70_ENCCU</name>
<feature type="chain" id="PRO_0000078401" description="Mitochondrial-type heat shock protein 70">
    <location>
        <begin position="1"/>
        <end position="592"/>
    </location>
</feature>
<keyword id="KW-0067">ATP-binding</keyword>
<keyword id="KW-0143">Chaperone</keyword>
<keyword id="KW-0547">Nucleotide-binding</keyword>
<keyword id="KW-0539">Nucleus</keyword>
<keyword id="KW-1185">Reference proteome</keyword>